<accession>A1ASW6</accession>
<keyword id="KW-0963">Cytoplasm</keyword>
<keyword id="KW-0489">Methyltransferase</keyword>
<keyword id="KW-1185">Reference proteome</keyword>
<keyword id="KW-0949">S-adenosyl-L-methionine</keyword>
<keyword id="KW-0808">Transferase</keyword>
<gene>
    <name evidence="1" type="primary">pcm2</name>
    <name type="ordered locus">Ppro_2838</name>
</gene>
<name>PIMT2_PELPD</name>
<dbReference type="EC" id="2.1.1.77" evidence="1"/>
<dbReference type="EMBL" id="CP000482">
    <property type="protein sequence ID" value="ABL00437.1"/>
    <property type="molecule type" value="Genomic_DNA"/>
</dbReference>
<dbReference type="RefSeq" id="WP_011736678.1">
    <property type="nucleotide sequence ID" value="NC_008609.1"/>
</dbReference>
<dbReference type="SMR" id="A1ASW6"/>
<dbReference type="STRING" id="338966.Ppro_2838"/>
<dbReference type="KEGG" id="ppd:Ppro_2838"/>
<dbReference type="eggNOG" id="COG2518">
    <property type="taxonomic scope" value="Bacteria"/>
</dbReference>
<dbReference type="HOGENOM" id="CLU_055432_2_0_7"/>
<dbReference type="OrthoDB" id="9810066at2"/>
<dbReference type="Proteomes" id="UP000006732">
    <property type="component" value="Chromosome"/>
</dbReference>
<dbReference type="GO" id="GO:0005737">
    <property type="term" value="C:cytoplasm"/>
    <property type="evidence" value="ECO:0007669"/>
    <property type="project" value="UniProtKB-SubCell"/>
</dbReference>
<dbReference type="GO" id="GO:0004719">
    <property type="term" value="F:protein-L-isoaspartate (D-aspartate) O-methyltransferase activity"/>
    <property type="evidence" value="ECO:0007669"/>
    <property type="project" value="UniProtKB-UniRule"/>
</dbReference>
<dbReference type="GO" id="GO:0032259">
    <property type="term" value="P:methylation"/>
    <property type="evidence" value="ECO:0007669"/>
    <property type="project" value="UniProtKB-KW"/>
</dbReference>
<dbReference type="GO" id="GO:0036211">
    <property type="term" value="P:protein modification process"/>
    <property type="evidence" value="ECO:0007669"/>
    <property type="project" value="UniProtKB-UniRule"/>
</dbReference>
<dbReference type="GO" id="GO:0030091">
    <property type="term" value="P:protein repair"/>
    <property type="evidence" value="ECO:0007669"/>
    <property type="project" value="UniProtKB-UniRule"/>
</dbReference>
<dbReference type="CDD" id="cd02440">
    <property type="entry name" value="AdoMet_MTases"/>
    <property type="match status" value="1"/>
</dbReference>
<dbReference type="FunFam" id="3.40.50.150:FF:000010">
    <property type="entry name" value="Protein-L-isoaspartate O-methyltransferase"/>
    <property type="match status" value="1"/>
</dbReference>
<dbReference type="Gene3D" id="3.40.50.150">
    <property type="entry name" value="Vaccinia Virus protein VP39"/>
    <property type="match status" value="1"/>
</dbReference>
<dbReference type="HAMAP" id="MF_00090">
    <property type="entry name" value="PIMT"/>
    <property type="match status" value="1"/>
</dbReference>
<dbReference type="InterPro" id="IPR000682">
    <property type="entry name" value="PCMT"/>
</dbReference>
<dbReference type="InterPro" id="IPR029063">
    <property type="entry name" value="SAM-dependent_MTases_sf"/>
</dbReference>
<dbReference type="NCBIfam" id="TIGR00080">
    <property type="entry name" value="pimt"/>
    <property type="match status" value="1"/>
</dbReference>
<dbReference type="NCBIfam" id="NF001453">
    <property type="entry name" value="PRK00312.1"/>
    <property type="match status" value="1"/>
</dbReference>
<dbReference type="PANTHER" id="PTHR11579">
    <property type="entry name" value="PROTEIN-L-ISOASPARTATE O-METHYLTRANSFERASE"/>
    <property type="match status" value="1"/>
</dbReference>
<dbReference type="PANTHER" id="PTHR11579:SF0">
    <property type="entry name" value="PROTEIN-L-ISOASPARTATE(D-ASPARTATE) O-METHYLTRANSFERASE"/>
    <property type="match status" value="1"/>
</dbReference>
<dbReference type="Pfam" id="PF01135">
    <property type="entry name" value="PCMT"/>
    <property type="match status" value="1"/>
</dbReference>
<dbReference type="SUPFAM" id="SSF53335">
    <property type="entry name" value="S-adenosyl-L-methionine-dependent methyltransferases"/>
    <property type="match status" value="1"/>
</dbReference>
<dbReference type="PROSITE" id="PS01279">
    <property type="entry name" value="PCMT"/>
    <property type="match status" value="1"/>
</dbReference>
<protein>
    <recommendedName>
        <fullName evidence="1">Protein-L-isoaspartate O-methyltransferase 2</fullName>
        <ecNumber evidence="1">2.1.1.77</ecNumber>
    </recommendedName>
    <alternativeName>
        <fullName evidence="1">L-isoaspartyl protein carboxyl methyltransferase 2</fullName>
    </alternativeName>
    <alternativeName>
        <fullName evidence="1">Protein L-isoaspartyl methyltransferase 2</fullName>
    </alternativeName>
    <alternativeName>
        <fullName evidence="1">Protein-beta-aspartate methyltransferase 2</fullName>
        <shortName evidence="1">PIMT 2</shortName>
    </alternativeName>
</protein>
<evidence type="ECO:0000255" key="1">
    <source>
        <dbReference type="HAMAP-Rule" id="MF_00090"/>
    </source>
</evidence>
<reference key="1">
    <citation type="submission" date="2006-10" db="EMBL/GenBank/DDBJ databases">
        <title>Complete sequence of chromosome of Pelobacter propionicus DSM 2379.</title>
        <authorList>
            <consortium name="US DOE Joint Genome Institute"/>
            <person name="Copeland A."/>
            <person name="Lucas S."/>
            <person name="Lapidus A."/>
            <person name="Barry K."/>
            <person name="Detter J.C."/>
            <person name="Glavina del Rio T."/>
            <person name="Hammon N."/>
            <person name="Israni S."/>
            <person name="Dalin E."/>
            <person name="Tice H."/>
            <person name="Pitluck S."/>
            <person name="Saunders E."/>
            <person name="Brettin T."/>
            <person name="Bruce D."/>
            <person name="Han C."/>
            <person name="Tapia R."/>
            <person name="Schmutz J."/>
            <person name="Larimer F."/>
            <person name="Land M."/>
            <person name="Hauser L."/>
            <person name="Kyrpides N."/>
            <person name="Kim E."/>
            <person name="Lovley D."/>
            <person name="Richardson P."/>
        </authorList>
    </citation>
    <scope>NUCLEOTIDE SEQUENCE [LARGE SCALE GENOMIC DNA]</scope>
    <source>
        <strain>DSM 2379 / NBRC 103807 / OttBd1</strain>
    </source>
</reference>
<proteinExistence type="inferred from homology"/>
<sequence length="225" mass="25003">MRYRCPMNCPSLRNQEYRREIMISEQLMGRGIRDPAVLAAMRQVPREAFVDQGMRELAYEDHPLPIDGGQTISQPYIVAYMTEALELSSSDRVLEIGTGSGYAAAVLSRIVHTVYSVERLEELARGARQRLESLGYNNVEVFEGDGTLGWPEHAPYDAIVVTAGAPAVPKPLLRQLVVGGRLVIPVGASSFLQNLIRVRRQGEDDYRSEELCGVRFVPLVGAEGW</sequence>
<feature type="chain" id="PRO_0000351897" description="Protein-L-isoaspartate O-methyltransferase 2">
    <location>
        <begin position="1"/>
        <end position="225"/>
    </location>
</feature>
<feature type="active site" evidence="1">
    <location>
        <position position="73"/>
    </location>
</feature>
<organism>
    <name type="scientific">Pelobacter propionicus (strain DSM 2379 / NBRC 103807 / OttBd1)</name>
    <dbReference type="NCBI Taxonomy" id="338966"/>
    <lineage>
        <taxon>Bacteria</taxon>
        <taxon>Pseudomonadati</taxon>
        <taxon>Thermodesulfobacteriota</taxon>
        <taxon>Desulfuromonadia</taxon>
        <taxon>Desulfuromonadales</taxon>
        <taxon>Desulfuromonadaceae</taxon>
        <taxon>Pelobacter</taxon>
    </lineage>
</organism>
<comment type="function">
    <text evidence="1">Catalyzes the methyl esterification of L-isoaspartyl residues in peptides and proteins that result from spontaneous decomposition of normal L-aspartyl and L-asparaginyl residues. It plays a role in the repair and/or degradation of damaged proteins.</text>
</comment>
<comment type="catalytic activity">
    <reaction evidence="1">
        <text>[protein]-L-isoaspartate + S-adenosyl-L-methionine = [protein]-L-isoaspartate alpha-methyl ester + S-adenosyl-L-homocysteine</text>
        <dbReference type="Rhea" id="RHEA:12705"/>
        <dbReference type="Rhea" id="RHEA-COMP:12143"/>
        <dbReference type="Rhea" id="RHEA-COMP:12144"/>
        <dbReference type="ChEBI" id="CHEBI:57856"/>
        <dbReference type="ChEBI" id="CHEBI:59789"/>
        <dbReference type="ChEBI" id="CHEBI:90596"/>
        <dbReference type="ChEBI" id="CHEBI:90598"/>
        <dbReference type="EC" id="2.1.1.77"/>
    </reaction>
</comment>
<comment type="subcellular location">
    <subcellularLocation>
        <location evidence="1">Cytoplasm</location>
    </subcellularLocation>
</comment>
<comment type="similarity">
    <text evidence="1">Belongs to the methyltransferase superfamily. L-isoaspartyl/D-aspartyl protein methyltransferase family.</text>
</comment>